<feature type="initiator methionine" description="Removed" evidence="2">
    <location>
        <position position="1"/>
    </location>
</feature>
<feature type="chain" id="PRO_0000288766" description="Dynactin subunit 2">
    <location>
        <begin position="2"/>
        <end position="402"/>
    </location>
</feature>
<feature type="region of interest" description="Disordered" evidence="5">
    <location>
        <begin position="1"/>
        <end position="24"/>
    </location>
</feature>
<feature type="region of interest" description="Disordered" evidence="5">
    <location>
        <begin position="185"/>
        <end position="205"/>
    </location>
</feature>
<feature type="coiled-coil region" evidence="4">
    <location>
        <begin position="100"/>
        <end position="130"/>
    </location>
</feature>
<feature type="coiled-coil region" evidence="4">
    <location>
        <begin position="215"/>
        <end position="247"/>
    </location>
</feature>
<feature type="modified residue" description="N-acetylalanine" evidence="2">
    <location>
        <position position="2"/>
    </location>
</feature>
<feature type="modified residue" description="Phosphotyrosine" evidence="2">
    <location>
        <position position="6"/>
    </location>
</feature>
<feature type="modified residue" description="Phosphoserine" evidence="2">
    <location>
        <position position="83"/>
    </location>
</feature>
<feature type="modified residue" description="Phosphotyrosine" evidence="3">
    <location>
        <position position="86"/>
    </location>
</feature>
<feature type="modified residue" description="Phosphothreonine" evidence="2">
    <location>
        <position position="134"/>
    </location>
</feature>
<feature type="modified residue" description="Phosphothreonine" evidence="7">
    <location>
        <position position="199"/>
    </location>
</feature>
<feature type="modified residue" description="Phosphoserine" evidence="3">
    <location>
        <position position="321"/>
    </location>
</feature>
<protein>
    <recommendedName>
        <fullName>Dynactin subunit 2</fullName>
    </recommendedName>
</protein>
<proteinExistence type="evidence at protein level"/>
<reference key="1">
    <citation type="journal article" date="2004" name="Genome Res.">
        <title>The status, quality, and expansion of the NIH full-length cDNA project: the Mammalian Gene Collection (MGC).</title>
        <authorList>
            <consortium name="The MGC Project Team"/>
        </authorList>
    </citation>
    <scope>NUCLEOTIDE SEQUENCE [LARGE SCALE MRNA]</scope>
    <source>
        <tissue>Testis</tissue>
    </source>
</reference>
<reference key="2">
    <citation type="submission" date="2007-04" db="UniProtKB">
        <authorList>
            <person name="Lubec G."/>
            <person name="Chen W.-Q."/>
        </authorList>
    </citation>
    <scope>PROTEIN SEQUENCE OF 269-283; 320-333 AND 381-396</scope>
    <scope>IDENTIFICATION BY MASS SPECTROMETRY</scope>
    <source>
        <strain>Sprague-Dawley</strain>
        <tissue>Hippocampus</tissue>
    </source>
</reference>
<reference key="3">
    <citation type="journal article" date="2012" name="Nat. Commun.">
        <title>Quantitative maps of protein phosphorylation sites across 14 different rat organs and tissues.</title>
        <authorList>
            <person name="Lundby A."/>
            <person name="Secher A."/>
            <person name="Lage K."/>
            <person name="Nordsborg N.B."/>
            <person name="Dmytriyev A."/>
            <person name="Lundby C."/>
            <person name="Olsen J.V."/>
        </authorList>
    </citation>
    <scope>PHOSPHORYLATION [LARGE SCALE ANALYSIS] AT THR-199</scope>
    <scope>IDENTIFICATION BY MASS SPECTROMETRY [LARGE SCALE ANALYSIS]</scope>
</reference>
<keyword id="KW-0007">Acetylation</keyword>
<keyword id="KW-0175">Coiled coil</keyword>
<keyword id="KW-0963">Cytoplasm</keyword>
<keyword id="KW-0206">Cytoskeleton</keyword>
<keyword id="KW-0903">Direct protein sequencing</keyword>
<keyword id="KW-0243">Dynein</keyword>
<keyword id="KW-0472">Membrane</keyword>
<keyword id="KW-0493">Microtubule</keyword>
<keyword id="KW-0597">Phosphoprotein</keyword>
<keyword id="KW-1185">Reference proteome</keyword>
<accession>Q6AYH5</accession>
<dbReference type="EMBL" id="BC079042">
    <property type="protein sequence ID" value="AAH79042.1"/>
    <property type="molecule type" value="mRNA"/>
</dbReference>
<dbReference type="RefSeq" id="NP_001004239.1">
    <property type="nucleotide sequence ID" value="NM_001004239.1"/>
</dbReference>
<dbReference type="BioGRID" id="256357">
    <property type="interactions" value="9"/>
</dbReference>
<dbReference type="FunCoup" id="Q6AYH5">
    <property type="interactions" value="2801"/>
</dbReference>
<dbReference type="IntAct" id="Q6AYH5">
    <property type="interactions" value="6"/>
</dbReference>
<dbReference type="MINT" id="Q6AYH5"/>
<dbReference type="STRING" id="10116.ENSRNOP00000069048"/>
<dbReference type="GlyGen" id="Q6AYH5">
    <property type="glycosylation" value="1 site"/>
</dbReference>
<dbReference type="iPTMnet" id="Q6AYH5"/>
<dbReference type="PhosphoSitePlus" id="Q6AYH5"/>
<dbReference type="jPOST" id="Q6AYH5"/>
<dbReference type="PaxDb" id="10116-ENSRNOP00000008120"/>
<dbReference type="Ensembl" id="ENSRNOT00000008120.5">
    <property type="protein sequence ID" value="ENSRNOP00000008120.4"/>
    <property type="gene ID" value="ENSRNOG00000025481.5"/>
</dbReference>
<dbReference type="GeneID" id="299850"/>
<dbReference type="KEGG" id="rno:299850"/>
<dbReference type="UCSC" id="RGD:1303182">
    <property type="organism name" value="rat"/>
</dbReference>
<dbReference type="AGR" id="RGD:1303182"/>
<dbReference type="CTD" id="10540"/>
<dbReference type="RGD" id="1303182">
    <property type="gene designation" value="Dctn2"/>
</dbReference>
<dbReference type="eggNOG" id="KOG3958">
    <property type="taxonomic scope" value="Eukaryota"/>
</dbReference>
<dbReference type="GeneTree" id="ENSGT00390000003427"/>
<dbReference type="HOGENOM" id="CLU_049964_1_0_1"/>
<dbReference type="InParanoid" id="Q6AYH5"/>
<dbReference type="OMA" id="YKFGDWE"/>
<dbReference type="PhylomeDB" id="Q6AYH5"/>
<dbReference type="TreeFam" id="TF105247"/>
<dbReference type="Reactome" id="R-RNO-2132295">
    <property type="pathway name" value="MHC class II antigen presentation"/>
</dbReference>
<dbReference type="Reactome" id="R-RNO-2565942">
    <property type="pathway name" value="Regulation of PLK1 Activity at G2/M Transition"/>
</dbReference>
<dbReference type="Reactome" id="R-RNO-3371497">
    <property type="pathway name" value="HSP90 chaperone cycle for steroid hormone receptors (SHR) in the presence of ligand"/>
</dbReference>
<dbReference type="Reactome" id="R-RNO-380259">
    <property type="pathway name" value="Loss of Nlp from mitotic centrosomes"/>
</dbReference>
<dbReference type="Reactome" id="R-RNO-380270">
    <property type="pathway name" value="Recruitment of mitotic centrosome proteins and complexes"/>
</dbReference>
<dbReference type="Reactome" id="R-RNO-380284">
    <property type="pathway name" value="Loss of proteins required for interphase microtubule organization from the centrosome"/>
</dbReference>
<dbReference type="Reactome" id="R-RNO-380320">
    <property type="pathway name" value="Recruitment of NuMA to mitotic centrosomes"/>
</dbReference>
<dbReference type="Reactome" id="R-RNO-5620912">
    <property type="pathway name" value="Anchoring of the basal body to the plasma membrane"/>
</dbReference>
<dbReference type="Reactome" id="R-RNO-6807878">
    <property type="pathway name" value="COPI-mediated anterograde transport"/>
</dbReference>
<dbReference type="Reactome" id="R-RNO-6811436">
    <property type="pathway name" value="COPI-independent Golgi-to-ER retrograde traffic"/>
</dbReference>
<dbReference type="Reactome" id="R-RNO-8854518">
    <property type="pathway name" value="AURKA Activation by TPX2"/>
</dbReference>
<dbReference type="PRO" id="PR:Q6AYH5"/>
<dbReference type="Proteomes" id="UP000002494">
    <property type="component" value="Chromosome 7"/>
</dbReference>
<dbReference type="Bgee" id="ENSRNOG00000025481">
    <property type="expression patterns" value="Expressed in testis and 19 other cell types or tissues"/>
</dbReference>
<dbReference type="ExpressionAtlas" id="Q6AYH5">
    <property type="expression patterns" value="baseline and differential"/>
</dbReference>
<dbReference type="GO" id="GO:0005813">
    <property type="term" value="C:centrosome"/>
    <property type="evidence" value="ECO:0000314"/>
    <property type="project" value="RGD"/>
</dbReference>
<dbReference type="GO" id="GO:0005737">
    <property type="term" value="C:cytoplasm"/>
    <property type="evidence" value="ECO:0000318"/>
    <property type="project" value="GO_Central"/>
</dbReference>
<dbReference type="GO" id="GO:0005869">
    <property type="term" value="C:dynactin complex"/>
    <property type="evidence" value="ECO:0000314"/>
    <property type="project" value="RGD"/>
</dbReference>
<dbReference type="GO" id="GO:0030286">
    <property type="term" value="C:dynein complex"/>
    <property type="evidence" value="ECO:0007669"/>
    <property type="project" value="UniProtKB-KW"/>
</dbReference>
<dbReference type="GO" id="GO:0030426">
    <property type="term" value="C:growth cone"/>
    <property type="evidence" value="ECO:0000266"/>
    <property type="project" value="RGD"/>
</dbReference>
<dbReference type="GO" id="GO:0000776">
    <property type="term" value="C:kinetochore"/>
    <property type="evidence" value="ECO:0000314"/>
    <property type="project" value="RGD"/>
</dbReference>
<dbReference type="GO" id="GO:0016020">
    <property type="term" value="C:membrane"/>
    <property type="evidence" value="ECO:0007669"/>
    <property type="project" value="UniProtKB-SubCell"/>
</dbReference>
<dbReference type="GO" id="GO:0005874">
    <property type="term" value="C:microtubule"/>
    <property type="evidence" value="ECO:0007669"/>
    <property type="project" value="UniProtKB-KW"/>
</dbReference>
<dbReference type="GO" id="GO:0031982">
    <property type="term" value="C:vesicle"/>
    <property type="evidence" value="ECO:0000250"/>
    <property type="project" value="UniProtKB"/>
</dbReference>
<dbReference type="GO" id="GO:0042802">
    <property type="term" value="F:identical protein binding"/>
    <property type="evidence" value="ECO:0000266"/>
    <property type="project" value="RGD"/>
</dbReference>
<dbReference type="GO" id="GO:0019901">
    <property type="term" value="F:protein kinase binding"/>
    <property type="evidence" value="ECO:0000266"/>
    <property type="project" value="RGD"/>
</dbReference>
<dbReference type="GO" id="GO:0030507">
    <property type="term" value="F:spectrin binding"/>
    <property type="evidence" value="ECO:0000266"/>
    <property type="project" value="RGD"/>
</dbReference>
<dbReference type="GO" id="GO:0032402">
    <property type="term" value="P:melanosome transport"/>
    <property type="evidence" value="ECO:0000266"/>
    <property type="project" value="RGD"/>
</dbReference>
<dbReference type="GO" id="GO:0007080">
    <property type="term" value="P:mitotic metaphase chromosome alignment"/>
    <property type="evidence" value="ECO:0000266"/>
    <property type="project" value="RGD"/>
</dbReference>
<dbReference type="GO" id="GO:0007052">
    <property type="term" value="P:mitotic spindle organization"/>
    <property type="evidence" value="ECO:0000266"/>
    <property type="project" value="RGD"/>
</dbReference>
<dbReference type="GO" id="GO:0071539">
    <property type="term" value="P:protein localization to centrosome"/>
    <property type="evidence" value="ECO:0000266"/>
    <property type="project" value="RGD"/>
</dbReference>
<dbReference type="InterPro" id="IPR028133">
    <property type="entry name" value="Dynamitin"/>
</dbReference>
<dbReference type="PANTHER" id="PTHR15346">
    <property type="entry name" value="DYNACTIN SUBUNIT"/>
    <property type="match status" value="1"/>
</dbReference>
<dbReference type="Pfam" id="PF04912">
    <property type="entry name" value="Dynamitin"/>
    <property type="match status" value="1"/>
</dbReference>
<gene>
    <name type="primary">Dctn2</name>
</gene>
<organism>
    <name type="scientific">Rattus norvegicus</name>
    <name type="common">Rat</name>
    <dbReference type="NCBI Taxonomy" id="10116"/>
    <lineage>
        <taxon>Eukaryota</taxon>
        <taxon>Metazoa</taxon>
        <taxon>Chordata</taxon>
        <taxon>Craniata</taxon>
        <taxon>Vertebrata</taxon>
        <taxon>Euteleostomi</taxon>
        <taxon>Mammalia</taxon>
        <taxon>Eutheria</taxon>
        <taxon>Euarchontoglires</taxon>
        <taxon>Glires</taxon>
        <taxon>Rodentia</taxon>
        <taxon>Myomorpha</taxon>
        <taxon>Muroidea</taxon>
        <taxon>Muridae</taxon>
        <taxon>Murinae</taxon>
        <taxon>Rattus</taxon>
    </lineage>
</organism>
<evidence type="ECO:0000250" key="1">
    <source>
        <dbReference type="UniProtKB" id="A0A5G2QD80"/>
    </source>
</evidence>
<evidence type="ECO:0000250" key="2">
    <source>
        <dbReference type="UniProtKB" id="Q13561"/>
    </source>
</evidence>
<evidence type="ECO:0000250" key="3">
    <source>
        <dbReference type="UniProtKB" id="Q99KJ8"/>
    </source>
</evidence>
<evidence type="ECO:0000255" key="4"/>
<evidence type="ECO:0000256" key="5">
    <source>
        <dbReference type="SAM" id="MobiDB-lite"/>
    </source>
</evidence>
<evidence type="ECO:0000305" key="6"/>
<evidence type="ECO:0007744" key="7">
    <source>
    </source>
</evidence>
<sequence length="402" mass="44148">MADPKYADLPGIARNEPDVYETSDLPEDDQAEFDAEELSSTSVEHIIVNPNAAYDKFKDKRVGTKGLDFSDRIGKTKRTGYESGDYEMLGEGLGVKETPQQKYQRLLHEVQELTTEVEKIKTTVKESATEEKLTPVVLAKQLAALKQQLVASHLEKLLGPDAAINLADPDGALAKRLLLQLEATKSSKGSSGGKSTGGTPPDSSLVTYELHSRPEQDKFSQAAKVAELEKRLTELEATVRCDQDAQNPLSAGLQGACLMETVELLQAKVNALDLAVLDQVEARLQSVLGKVNEIAKHKASVEDADTQNKVHQLYETIQRWSPVASTLPELVQRLVTIKQLHEQAMQFGQLLTHLDTTQQMMASSLKDNTALLTQVQTTMRENLATVEGNFASIDARMKKLGK</sequence>
<name>DCTN2_RAT</name>
<comment type="function">
    <text evidence="1 3">Part of the dynactin complex that activates the molecular motor dynein for ultra-processive transport along microtubules. In the dynactin soulder domain, binds the ACTR1A filament and acts as a molecular ruler to determine the length (By similarity). Modulates cytoplasmic dynein binding to an organelle, and plays a role in prometaphase chromosome alignment and spindle organization during mitosis. Involved in anchoring microtubules to centrosomes. May play a role in synapse formation during brain development (By similarity).</text>
</comment>
<comment type="subunit">
    <text evidence="1 2 3">Subunit of dynactin, a multiprotein complex part of a tripartite complex with dynein and a adapter, such as BICDL1, BICD2 or HOOK3. The dynactin complex is built around ACTR1A/ACTB filament and consists of an actin-related filament composed of a shoulder domain, a pointed end and a barbed end. Its length is defined by its flexible shoulder domain. The soulder is composed of 2 DCTN1 subunits, 4 DCTN2 and 2 DCTN3. The 4 DCNT2 (via N-terminus) bind the ACTR1A filament and act as molecular rulers to determine the length. The pointed end is important for binding dynein-dynactin cargo adapters and consists of 4 subunits: ACTR10, DCNT4, DCTN5 and DCTN6. The barbed end is composed of a CAPZA1:CAPZB heterodimers, which binds ACTR1A/ACTB filament and dynactin and stabilizes dynactin (By similarity). Interacts with BICD2 and CEP135 (By similarity). Interacts with DYNAP. Interacts with ECPAS. Interacts with MAPRE1 (By similarity).</text>
</comment>
<comment type="subcellular location">
    <subcellularLocation>
        <location evidence="2">Cytoplasm</location>
        <location evidence="2">Cytoskeleton</location>
        <location evidence="2">Microtubule organizing center</location>
        <location evidence="2">Centrosome</location>
    </subcellularLocation>
    <subcellularLocation>
        <location evidence="2">Membrane</location>
        <topology evidence="2">Peripheral membrane protein</topology>
    </subcellularLocation>
    <subcellularLocation>
        <location evidence="1">Cytoplasm</location>
        <location evidence="1">Cytoskeleton</location>
    </subcellularLocation>
</comment>
<comment type="similarity">
    <text evidence="6">Belongs to the dynactin subunit 2 family.</text>
</comment>